<keyword id="KW-0150">Chloroplast</keyword>
<keyword id="KW-0472">Membrane</keyword>
<keyword id="KW-0520">NAD</keyword>
<keyword id="KW-0521">NADP</keyword>
<keyword id="KW-0934">Plastid</keyword>
<keyword id="KW-0618">Plastoquinone</keyword>
<keyword id="KW-0874">Quinone</keyword>
<keyword id="KW-0793">Thylakoid</keyword>
<keyword id="KW-1278">Translocase</keyword>
<keyword id="KW-0812">Transmembrane</keyword>
<keyword id="KW-1133">Transmembrane helix</keyword>
<organism>
    <name type="scientific">Marchantia polymorpha</name>
    <name type="common">Common liverwort</name>
    <name type="synonym">Marchantia aquatica</name>
    <dbReference type="NCBI Taxonomy" id="3197"/>
    <lineage>
        <taxon>Eukaryota</taxon>
        <taxon>Viridiplantae</taxon>
        <taxon>Streptophyta</taxon>
        <taxon>Embryophyta</taxon>
        <taxon>Marchantiophyta</taxon>
        <taxon>Marchantiopsida</taxon>
        <taxon>Marchantiidae</taxon>
        <taxon>Marchantiales</taxon>
        <taxon>Marchantiaceae</taxon>
        <taxon>Marchantia</taxon>
    </lineage>
</organism>
<feature type="chain" id="PRO_0000117510" description="NAD(P)H-quinone oxidoreductase subunit 1, chloroplastic">
    <location>
        <begin position="1"/>
        <end position="368"/>
    </location>
</feature>
<feature type="transmembrane region" description="Helical" evidence="1">
    <location>
        <begin position="27"/>
        <end position="47"/>
    </location>
</feature>
<feature type="transmembrane region" description="Helical" evidence="1">
    <location>
        <begin position="97"/>
        <end position="117"/>
    </location>
</feature>
<feature type="transmembrane region" description="Helical" evidence="1">
    <location>
        <begin position="130"/>
        <end position="150"/>
    </location>
</feature>
<feature type="transmembrane region" description="Helical" evidence="1">
    <location>
        <begin position="166"/>
        <end position="186"/>
    </location>
</feature>
<feature type="transmembrane region" description="Helical" evidence="1">
    <location>
        <begin position="204"/>
        <end position="224"/>
    </location>
</feature>
<feature type="transmembrane region" description="Helical" evidence="1">
    <location>
        <begin position="249"/>
        <end position="269"/>
    </location>
</feature>
<feature type="transmembrane region" description="Helical" evidence="1">
    <location>
        <begin position="270"/>
        <end position="290"/>
    </location>
</feature>
<feature type="transmembrane region" description="Helical" evidence="1">
    <location>
        <begin position="305"/>
        <end position="325"/>
    </location>
</feature>
<feature type="transmembrane region" description="Helical" evidence="1">
    <location>
        <begin position="348"/>
        <end position="368"/>
    </location>
</feature>
<proteinExistence type="inferred from homology"/>
<gene>
    <name evidence="1" type="primary">ndhA</name>
    <name type="synonym">ndh1</name>
</gene>
<name>NU1C_MARPO</name>
<geneLocation type="chloroplast"/>
<comment type="function">
    <text evidence="1">NDH shuttles electrons from NAD(P)H:plastoquinone, via FMN and iron-sulfur (Fe-S) centers, to quinones in the photosynthetic chain and possibly in a chloroplast respiratory chain. The immediate electron acceptor for the enzyme in this species is believed to be plastoquinone. Couples the redox reaction to proton translocation, and thus conserves the redox energy in a proton gradient.</text>
</comment>
<comment type="catalytic activity">
    <reaction evidence="1">
        <text>a plastoquinone + NADH + (n+1) H(+)(in) = a plastoquinol + NAD(+) + n H(+)(out)</text>
        <dbReference type="Rhea" id="RHEA:42608"/>
        <dbReference type="Rhea" id="RHEA-COMP:9561"/>
        <dbReference type="Rhea" id="RHEA-COMP:9562"/>
        <dbReference type="ChEBI" id="CHEBI:15378"/>
        <dbReference type="ChEBI" id="CHEBI:17757"/>
        <dbReference type="ChEBI" id="CHEBI:57540"/>
        <dbReference type="ChEBI" id="CHEBI:57945"/>
        <dbReference type="ChEBI" id="CHEBI:62192"/>
    </reaction>
</comment>
<comment type="catalytic activity">
    <reaction evidence="1">
        <text>a plastoquinone + NADPH + (n+1) H(+)(in) = a plastoquinol + NADP(+) + n H(+)(out)</text>
        <dbReference type="Rhea" id="RHEA:42612"/>
        <dbReference type="Rhea" id="RHEA-COMP:9561"/>
        <dbReference type="Rhea" id="RHEA-COMP:9562"/>
        <dbReference type="ChEBI" id="CHEBI:15378"/>
        <dbReference type="ChEBI" id="CHEBI:17757"/>
        <dbReference type="ChEBI" id="CHEBI:57783"/>
        <dbReference type="ChEBI" id="CHEBI:58349"/>
        <dbReference type="ChEBI" id="CHEBI:62192"/>
    </reaction>
</comment>
<comment type="subunit">
    <text evidence="1">NDH is composed of at least 16 different subunits, 5 of which are encoded in the nucleus.</text>
</comment>
<comment type="subcellular location">
    <subcellularLocation>
        <location evidence="1">Plastid</location>
        <location evidence="1">Chloroplast thylakoid membrane</location>
        <topology evidence="1">Multi-pass membrane protein</topology>
    </subcellularLocation>
</comment>
<comment type="similarity">
    <text evidence="1">Belongs to the complex I subunit 1 family.</text>
</comment>
<evidence type="ECO:0000255" key="1">
    <source>
        <dbReference type="HAMAP-Rule" id="MF_01350"/>
    </source>
</evidence>
<accession>P06255</accession>
<protein>
    <recommendedName>
        <fullName evidence="1">NAD(P)H-quinone oxidoreductase subunit 1, chloroplastic</fullName>
        <ecNumber evidence="1">7.1.1.-</ecNumber>
    </recommendedName>
    <alternativeName>
        <fullName evidence="1">NAD(P)H dehydrogenase subunit 1</fullName>
        <shortName evidence="1">NDH subunit 1</shortName>
    </alternativeName>
    <alternativeName>
        <fullName evidence="1">NADH-plastoquinone oxidoreductase subunit 1</fullName>
    </alternativeName>
</protein>
<dbReference type="EC" id="7.1.1.-" evidence="1"/>
<dbReference type="EMBL" id="X04465">
    <property type="protein sequence ID" value="CAA28139.1"/>
    <property type="molecule type" value="Genomic_DNA"/>
</dbReference>
<dbReference type="PIR" id="A00413">
    <property type="entry name" value="DELVN1"/>
</dbReference>
<dbReference type="RefSeq" id="NP_039353.1">
    <property type="nucleotide sequence ID" value="NC_001319.1"/>
</dbReference>
<dbReference type="SMR" id="P06255"/>
<dbReference type="GeneID" id="2702580"/>
<dbReference type="GO" id="GO:0009535">
    <property type="term" value="C:chloroplast thylakoid membrane"/>
    <property type="evidence" value="ECO:0007669"/>
    <property type="project" value="UniProtKB-SubCell"/>
</dbReference>
<dbReference type="GO" id="GO:0016655">
    <property type="term" value="F:oxidoreductase activity, acting on NAD(P)H, quinone or similar compound as acceptor"/>
    <property type="evidence" value="ECO:0007669"/>
    <property type="project" value="UniProtKB-UniRule"/>
</dbReference>
<dbReference type="GO" id="GO:0048038">
    <property type="term" value="F:quinone binding"/>
    <property type="evidence" value="ECO:0007669"/>
    <property type="project" value="UniProtKB-KW"/>
</dbReference>
<dbReference type="GO" id="GO:0019684">
    <property type="term" value="P:photosynthesis, light reaction"/>
    <property type="evidence" value="ECO:0007669"/>
    <property type="project" value="UniProtKB-UniRule"/>
</dbReference>
<dbReference type="HAMAP" id="MF_01350">
    <property type="entry name" value="NDH1_NuoH"/>
    <property type="match status" value="1"/>
</dbReference>
<dbReference type="InterPro" id="IPR001694">
    <property type="entry name" value="NADH_UbQ_OxRdtase_su1/FPO"/>
</dbReference>
<dbReference type="InterPro" id="IPR018086">
    <property type="entry name" value="NADH_UbQ_OxRdtase_su1_CS"/>
</dbReference>
<dbReference type="NCBIfam" id="NF004741">
    <property type="entry name" value="PRK06076.1-2"/>
    <property type="match status" value="1"/>
</dbReference>
<dbReference type="NCBIfam" id="NF004744">
    <property type="entry name" value="PRK06076.1-5"/>
    <property type="match status" value="1"/>
</dbReference>
<dbReference type="PANTHER" id="PTHR11432">
    <property type="entry name" value="NADH DEHYDROGENASE SUBUNIT 1"/>
    <property type="match status" value="1"/>
</dbReference>
<dbReference type="PANTHER" id="PTHR11432:SF3">
    <property type="entry name" value="NADH-UBIQUINONE OXIDOREDUCTASE CHAIN 1"/>
    <property type="match status" value="1"/>
</dbReference>
<dbReference type="Pfam" id="PF00146">
    <property type="entry name" value="NADHdh"/>
    <property type="match status" value="1"/>
</dbReference>
<dbReference type="PROSITE" id="PS00667">
    <property type="entry name" value="COMPLEX1_ND1_1"/>
    <property type="match status" value="1"/>
</dbReference>
<dbReference type="PROSITE" id="PS00668">
    <property type="entry name" value="COMPLEX1_ND1_2"/>
    <property type="match status" value="1"/>
</dbReference>
<sequence>MISNINLEDKFFSFFFTLGFSKEFFNFLWIIFSILILMLGVTIGVLVLVWLERKISAAIQQRIGPEYAGPLGIIQALADGIKLFLKEDIVPAQGDVWLFNIGPILVLIPVFLSYLVIPFEYNVILANFSIGVFFWIAVSSVVPLGLLMAGYGSNNKYSFLGGLRAAAQSISYEIPLALSVLSIALLSNSLSTVDIVEAQSKYGFLSWNLWRQPIGFIVFFIASLAECERLPFDLPEAEEELVAGYQTEYSGMKFAFFYLASYLNLLVSSLFVTILYLGGWHFSIPFFSLFKNFEWNLMSNGISEVISIIIGIVITLVKSYLFLFISIMTRWTLPRIRIDQLLNLGWKFLLPIALGNLLLTTSFQLFLL</sequence>
<reference key="1">
    <citation type="journal article" date="1986" name="Nature">
        <title>Chloroplast gene organization deduced from complete sequence of liverwort Marchantia polymorpha chloroplast DNA.</title>
        <authorList>
            <person name="Ohyama K."/>
            <person name="Fukuzawa H."/>
            <person name="Kohchi T."/>
            <person name="Shirai H."/>
            <person name="Sano T."/>
            <person name="Sano S."/>
            <person name="Umesono K."/>
            <person name="Shiki Y."/>
            <person name="Takeuchi M."/>
            <person name="Chang Z."/>
            <person name="Aota S."/>
            <person name="Inokuchi H."/>
            <person name="Ozeki H."/>
        </authorList>
    </citation>
    <scope>NUCLEOTIDE SEQUENCE [LARGE SCALE GENOMIC DNA]</scope>
</reference>
<reference key="2">
    <citation type="journal article" date="1988" name="J. Mol. Biol.">
        <title>Structure and organization of Marchantia polymorpha chloroplast genome. IV. Inverted repeat and small single copy regions.</title>
        <authorList>
            <person name="Kohchi T."/>
            <person name="Shirai H."/>
            <person name="Fukuzawa H."/>
            <person name="Sano T."/>
            <person name="Komano T."/>
            <person name="Umesono K."/>
            <person name="Inokuchi H."/>
            <person name="Ozeki H."/>
            <person name="Ohyama K."/>
        </authorList>
    </citation>
    <scope>NUCLEOTIDE SEQUENCE [GENOMIC DNA]</scope>
</reference>